<gene>
    <name type="primary">ttdB</name>
    <name type="ordered locus">SSON_3199</name>
</gene>
<feature type="chain" id="PRO_0000262706" description="L(+)-tartrate dehydratase subunit beta">
    <location>
        <begin position="1"/>
        <end position="201"/>
    </location>
</feature>
<feature type="active site" evidence="2">
    <location>
        <position position="37"/>
    </location>
</feature>
<proteinExistence type="inferred from homology"/>
<comment type="catalytic activity">
    <reaction>
        <text>(2R,3R)-tartrate = oxaloacetate + H2O</text>
        <dbReference type="Rhea" id="RHEA:15413"/>
        <dbReference type="ChEBI" id="CHEBI:15377"/>
        <dbReference type="ChEBI" id="CHEBI:16452"/>
        <dbReference type="ChEBI" id="CHEBI:30924"/>
        <dbReference type="EC" id="4.2.1.32"/>
    </reaction>
</comment>
<comment type="subunit">
    <text evidence="1">Heterotetramer of two alpha and two beta subunits.</text>
</comment>
<comment type="similarity">
    <text evidence="3">Belongs to the class-I fumarase family.</text>
</comment>
<keyword id="KW-0456">Lyase</keyword>
<keyword id="KW-1185">Reference proteome</keyword>
<protein>
    <recommendedName>
        <fullName>L(+)-tartrate dehydratase subunit beta</fullName>
        <shortName>L-TTD beta</shortName>
        <ecNumber>4.2.1.32</ecNumber>
    </recommendedName>
</protein>
<name>TTDB_SHISS</name>
<sequence length="201" mass="22737">MKKILTTPIKAEDLQDIRVDDVIYLTGTLVTCRDVCHRRLIELKRPIPYDLNGKAIFHAGPIVRKNGDKWEMVSVGPTTSMRMESFEREFIEQTGVKLVVGKGGMGPLTEEGCQKFKALHVIFPAGCAVLAATQVEEIEEVHWTELGMPESLWVCRVKEFGPLIVSIDTHGNNLIAENKKLFAERRDPIVEEICEHVHYIK</sequence>
<reference key="1">
    <citation type="journal article" date="2005" name="Nucleic Acids Res.">
        <title>Genome dynamics and diversity of Shigella species, the etiologic agents of bacillary dysentery.</title>
        <authorList>
            <person name="Yang F."/>
            <person name="Yang J."/>
            <person name="Zhang X."/>
            <person name="Chen L."/>
            <person name="Jiang Y."/>
            <person name="Yan Y."/>
            <person name="Tang X."/>
            <person name="Wang J."/>
            <person name="Xiong Z."/>
            <person name="Dong J."/>
            <person name="Xue Y."/>
            <person name="Zhu Y."/>
            <person name="Xu X."/>
            <person name="Sun L."/>
            <person name="Chen S."/>
            <person name="Nie H."/>
            <person name="Peng J."/>
            <person name="Xu J."/>
            <person name="Wang Y."/>
            <person name="Yuan Z."/>
            <person name="Wen Y."/>
            <person name="Yao Z."/>
            <person name="Shen Y."/>
            <person name="Qiang B."/>
            <person name="Hou Y."/>
            <person name="Yu J."/>
            <person name="Jin Q."/>
        </authorList>
    </citation>
    <scope>NUCLEOTIDE SEQUENCE [LARGE SCALE GENOMIC DNA]</scope>
    <source>
        <strain>Ss046</strain>
    </source>
</reference>
<evidence type="ECO:0000250" key="1"/>
<evidence type="ECO:0000255" key="2"/>
<evidence type="ECO:0000305" key="3"/>
<dbReference type="EC" id="4.2.1.32"/>
<dbReference type="EMBL" id="CP000038">
    <property type="protein sequence ID" value="AAZ89781.1"/>
    <property type="molecule type" value="Genomic_DNA"/>
</dbReference>
<dbReference type="RefSeq" id="WP_000722950.1">
    <property type="nucleotide sequence ID" value="NC_007384.1"/>
</dbReference>
<dbReference type="SMR" id="Q3YXI1"/>
<dbReference type="GeneID" id="93778931"/>
<dbReference type="KEGG" id="ssn:SSON_3199"/>
<dbReference type="HOGENOM" id="CLU_098588_0_0_6"/>
<dbReference type="Proteomes" id="UP000002529">
    <property type="component" value="Chromosome"/>
</dbReference>
<dbReference type="GO" id="GO:0008730">
    <property type="term" value="F:L(+)-tartrate dehydratase activity"/>
    <property type="evidence" value="ECO:0007669"/>
    <property type="project" value="UniProtKB-EC"/>
</dbReference>
<dbReference type="FunFam" id="3.20.130.10:FF:000002">
    <property type="entry name" value="L(+)-tartrate dehydratase subunit beta"/>
    <property type="match status" value="1"/>
</dbReference>
<dbReference type="Gene3D" id="3.20.130.10">
    <property type="entry name" value="Fe-S hydro-lyase, tartrate dehydratase beta-type, catalytic domain"/>
    <property type="match status" value="1"/>
</dbReference>
<dbReference type="InterPro" id="IPR004647">
    <property type="entry name" value="Fe-S_hydro-lyase_TtdB-typ_cat"/>
</dbReference>
<dbReference type="InterPro" id="IPR036660">
    <property type="entry name" value="Fe-S_hydroAse_TtdB_cat_sf"/>
</dbReference>
<dbReference type="NCBIfam" id="NF006082">
    <property type="entry name" value="PRK08228.1"/>
    <property type="match status" value="1"/>
</dbReference>
<dbReference type="NCBIfam" id="TIGR00723">
    <property type="entry name" value="ttdB_fumA_fumB"/>
    <property type="match status" value="1"/>
</dbReference>
<dbReference type="PANTHER" id="PTHR43351">
    <property type="entry name" value="L(+)-TARTRATE DEHYDRATASE SUBUNIT BETA"/>
    <property type="match status" value="1"/>
</dbReference>
<dbReference type="PANTHER" id="PTHR43351:SF3">
    <property type="entry name" value="L(+)-TARTRATE DEHYDRATASE SUBUNIT BETA"/>
    <property type="match status" value="1"/>
</dbReference>
<dbReference type="Pfam" id="PF05683">
    <property type="entry name" value="Fumerase_C"/>
    <property type="match status" value="1"/>
</dbReference>
<dbReference type="SUPFAM" id="SSF117457">
    <property type="entry name" value="FumA C-terminal domain-like"/>
    <property type="match status" value="1"/>
</dbReference>
<accession>Q3YXI1</accession>
<organism>
    <name type="scientific">Shigella sonnei (strain Ss046)</name>
    <dbReference type="NCBI Taxonomy" id="300269"/>
    <lineage>
        <taxon>Bacteria</taxon>
        <taxon>Pseudomonadati</taxon>
        <taxon>Pseudomonadota</taxon>
        <taxon>Gammaproteobacteria</taxon>
        <taxon>Enterobacterales</taxon>
        <taxon>Enterobacteriaceae</taxon>
        <taxon>Shigella</taxon>
    </lineage>
</organism>